<protein>
    <recommendedName>
        <fullName evidence="1">Large ribosomal subunit protein uL24</fullName>
    </recommendedName>
    <alternativeName>
        <fullName evidence="2">50S ribosomal protein L24</fullName>
    </alternativeName>
</protein>
<dbReference type="EMBL" id="CP000921">
    <property type="protein sequence ID" value="ACO22832.1"/>
    <property type="molecule type" value="Genomic_DNA"/>
</dbReference>
<dbReference type="RefSeq" id="WP_000497691.1">
    <property type="nucleotide sequence ID" value="NC_012469.1"/>
</dbReference>
<dbReference type="SMR" id="C1CP99"/>
<dbReference type="GeneID" id="93738968"/>
<dbReference type="KEGG" id="snt:SPT_0267"/>
<dbReference type="HOGENOM" id="CLU_093315_2_0_9"/>
<dbReference type="GO" id="GO:1990904">
    <property type="term" value="C:ribonucleoprotein complex"/>
    <property type="evidence" value="ECO:0007669"/>
    <property type="project" value="UniProtKB-KW"/>
</dbReference>
<dbReference type="GO" id="GO:0005840">
    <property type="term" value="C:ribosome"/>
    <property type="evidence" value="ECO:0007669"/>
    <property type="project" value="UniProtKB-KW"/>
</dbReference>
<dbReference type="GO" id="GO:0019843">
    <property type="term" value="F:rRNA binding"/>
    <property type="evidence" value="ECO:0007669"/>
    <property type="project" value="UniProtKB-UniRule"/>
</dbReference>
<dbReference type="GO" id="GO:0003735">
    <property type="term" value="F:structural constituent of ribosome"/>
    <property type="evidence" value="ECO:0007669"/>
    <property type="project" value="InterPro"/>
</dbReference>
<dbReference type="GO" id="GO:0006412">
    <property type="term" value="P:translation"/>
    <property type="evidence" value="ECO:0007669"/>
    <property type="project" value="UniProtKB-UniRule"/>
</dbReference>
<dbReference type="CDD" id="cd06089">
    <property type="entry name" value="KOW_RPL26"/>
    <property type="match status" value="1"/>
</dbReference>
<dbReference type="FunFam" id="2.30.30.30:FF:000004">
    <property type="entry name" value="50S ribosomal protein L24"/>
    <property type="match status" value="1"/>
</dbReference>
<dbReference type="Gene3D" id="2.30.30.30">
    <property type="match status" value="1"/>
</dbReference>
<dbReference type="HAMAP" id="MF_01326_B">
    <property type="entry name" value="Ribosomal_uL24_B"/>
    <property type="match status" value="1"/>
</dbReference>
<dbReference type="InterPro" id="IPR005824">
    <property type="entry name" value="KOW"/>
</dbReference>
<dbReference type="InterPro" id="IPR014722">
    <property type="entry name" value="Rib_uL2_dom2"/>
</dbReference>
<dbReference type="InterPro" id="IPR003256">
    <property type="entry name" value="Ribosomal_uL24"/>
</dbReference>
<dbReference type="InterPro" id="IPR005825">
    <property type="entry name" value="Ribosomal_uL24_CS"/>
</dbReference>
<dbReference type="InterPro" id="IPR041988">
    <property type="entry name" value="Ribosomal_uL24_KOW"/>
</dbReference>
<dbReference type="InterPro" id="IPR008991">
    <property type="entry name" value="Translation_prot_SH3-like_sf"/>
</dbReference>
<dbReference type="NCBIfam" id="TIGR01079">
    <property type="entry name" value="rplX_bact"/>
    <property type="match status" value="1"/>
</dbReference>
<dbReference type="PANTHER" id="PTHR12903">
    <property type="entry name" value="MITOCHONDRIAL RIBOSOMAL PROTEIN L24"/>
    <property type="match status" value="1"/>
</dbReference>
<dbReference type="Pfam" id="PF00467">
    <property type="entry name" value="KOW"/>
    <property type="match status" value="1"/>
</dbReference>
<dbReference type="Pfam" id="PF17136">
    <property type="entry name" value="ribosomal_L24"/>
    <property type="match status" value="1"/>
</dbReference>
<dbReference type="SMART" id="SM00739">
    <property type="entry name" value="KOW"/>
    <property type="match status" value="1"/>
</dbReference>
<dbReference type="SUPFAM" id="SSF50104">
    <property type="entry name" value="Translation proteins SH3-like domain"/>
    <property type="match status" value="1"/>
</dbReference>
<dbReference type="PROSITE" id="PS01108">
    <property type="entry name" value="RIBOSOMAL_L24"/>
    <property type="match status" value="1"/>
</dbReference>
<reference key="1">
    <citation type="journal article" date="2010" name="Genome Biol.">
        <title>Structure and dynamics of the pan-genome of Streptococcus pneumoniae and closely related species.</title>
        <authorList>
            <person name="Donati C."/>
            <person name="Hiller N.L."/>
            <person name="Tettelin H."/>
            <person name="Muzzi A."/>
            <person name="Croucher N.J."/>
            <person name="Angiuoli S.V."/>
            <person name="Oggioni M."/>
            <person name="Dunning Hotopp J.C."/>
            <person name="Hu F.Z."/>
            <person name="Riley D.R."/>
            <person name="Covacci A."/>
            <person name="Mitchell T.J."/>
            <person name="Bentley S.D."/>
            <person name="Kilian M."/>
            <person name="Ehrlich G.D."/>
            <person name="Rappuoli R."/>
            <person name="Moxon E.R."/>
            <person name="Masignani V."/>
        </authorList>
    </citation>
    <scope>NUCLEOTIDE SEQUENCE [LARGE SCALE GENOMIC DNA]</scope>
    <source>
        <strain>Taiwan19F-14</strain>
    </source>
</reference>
<keyword id="KW-0687">Ribonucleoprotein</keyword>
<keyword id="KW-0689">Ribosomal protein</keyword>
<keyword id="KW-0694">RNA-binding</keyword>
<keyword id="KW-0699">rRNA-binding</keyword>
<feature type="chain" id="PRO_1000165970" description="Large ribosomal subunit protein uL24">
    <location>
        <begin position="1"/>
        <end position="101"/>
    </location>
</feature>
<accession>C1CP99</accession>
<sequence length="101" mass="10991">MFVKKGDKVRVIAGKDKGTEAVVLTALPKVNKVIVEGVNIVKKHQRPTNELPQGGIIEKEAAIHVSNVQVLDKNGVAGRVGYKFVDGKKVRYNKKSGEVLD</sequence>
<name>RL24_STRZT</name>
<proteinExistence type="inferred from homology"/>
<organism>
    <name type="scientific">Streptococcus pneumoniae (strain Taiwan19F-14)</name>
    <dbReference type="NCBI Taxonomy" id="487213"/>
    <lineage>
        <taxon>Bacteria</taxon>
        <taxon>Bacillati</taxon>
        <taxon>Bacillota</taxon>
        <taxon>Bacilli</taxon>
        <taxon>Lactobacillales</taxon>
        <taxon>Streptococcaceae</taxon>
        <taxon>Streptococcus</taxon>
    </lineage>
</organism>
<gene>
    <name evidence="1" type="primary">rplX</name>
    <name type="ordered locus">SPT_0267</name>
</gene>
<evidence type="ECO:0000255" key="1">
    <source>
        <dbReference type="HAMAP-Rule" id="MF_01326"/>
    </source>
</evidence>
<evidence type="ECO:0000305" key="2"/>
<comment type="function">
    <text evidence="1">One of two assembly initiator proteins, it binds directly to the 5'-end of the 23S rRNA, where it nucleates assembly of the 50S subunit.</text>
</comment>
<comment type="function">
    <text evidence="1">One of the proteins that surrounds the polypeptide exit tunnel on the outside of the subunit.</text>
</comment>
<comment type="subunit">
    <text evidence="1">Part of the 50S ribosomal subunit.</text>
</comment>
<comment type="similarity">
    <text evidence="1">Belongs to the universal ribosomal protein uL24 family.</text>
</comment>